<proteinExistence type="evidence at protein level"/>
<evidence type="ECO:0000250" key="1">
    <source>
        <dbReference type="UniProtKB" id="P28002"/>
    </source>
</evidence>
<evidence type="ECO:0000255" key="2">
    <source>
        <dbReference type="PROSITE-ProRule" id="PRU01020"/>
    </source>
</evidence>
<evidence type="ECO:0000269" key="3">
    <source>
    </source>
</evidence>
<evidence type="ECO:0000269" key="4">
    <source>
    </source>
</evidence>
<evidence type="ECO:0000269" key="5">
    <source>
    </source>
</evidence>
<evidence type="ECO:0000305" key="6"/>
<feature type="chain" id="PRO_0000442940" description="3-aminomethylindole N-methyltransferase">
    <location>
        <begin position="1"/>
        <end position="376"/>
    </location>
</feature>
<feature type="binding site" evidence="1">
    <location>
        <position position="220"/>
    </location>
    <ligand>
        <name>S-adenosyl-L-homocysteine</name>
        <dbReference type="ChEBI" id="CHEBI:57856"/>
    </ligand>
</feature>
<feature type="binding site" evidence="1">
    <location>
        <position position="243"/>
    </location>
    <ligand>
        <name>S-adenosyl-L-homocysteine</name>
        <dbReference type="ChEBI" id="CHEBI:57856"/>
    </ligand>
</feature>
<feature type="binding site" evidence="1">
    <location>
        <position position="263"/>
    </location>
    <ligand>
        <name>S-adenosyl-L-homocysteine</name>
        <dbReference type="ChEBI" id="CHEBI:57856"/>
    </ligand>
</feature>
<feature type="binding site" evidence="1">
    <location>
        <position position="264"/>
    </location>
    <ligand>
        <name>S-adenosyl-L-homocysteine</name>
        <dbReference type="ChEBI" id="CHEBI:57856"/>
    </ligand>
</feature>
<reference key="1">
    <citation type="journal article" date="1997" name="DNA Seq.">
        <title>Genomic sequence and mapping of a methyljasmonate-induced O-methyltransferase from barley (Hordeum vulgare L.).</title>
        <authorList>
            <person name="Lee J.E."/>
            <person name="Kleinhofs A."/>
            <person name="Graner A."/>
            <person name="Wegener S."/>
            <person name="Parthier B."/>
            <person name="Loebler M."/>
        </authorList>
    </citation>
    <scope>NUCLEOTIDE SEQUENCE [GENOMIC DNA]</scope>
    <scope>INDUCTION BY JASMONIC ACID</scope>
    <scope>MISCELLANEOUS</scope>
    <source>
        <strain>cv. Igri</strain>
        <strain>cv. Morex</strain>
        <strain>cv. Salome</strain>
    </source>
</reference>
<reference key="2">
    <citation type="journal article" date="2011" name="Plant Physiol.">
        <title>Comprehensive sequence analysis of 24,783 barley full-length cDNAs derived from 12 clone libraries.</title>
        <authorList>
            <person name="Matsumoto T."/>
            <person name="Tanaka T."/>
            <person name="Sakai H."/>
            <person name="Amano N."/>
            <person name="Kanamori H."/>
            <person name="Kurita K."/>
            <person name="Kikuta A."/>
            <person name="Kamiya K."/>
            <person name="Yamamoto M."/>
            <person name="Ikawa H."/>
            <person name="Fujii N."/>
            <person name="Hori K."/>
            <person name="Itoh T."/>
            <person name="Sato K."/>
        </authorList>
    </citation>
    <scope>NUCLEOTIDE SEQUENCE [LARGE SCALE MRNA]</scope>
    <source>
        <strain>cv. Haruna Nijo</strain>
        <tissue>Shoot</tissue>
    </source>
</reference>
<reference key="3">
    <citation type="journal article" date="1985" name="Plant Physiol.">
        <title>Induction of a specific N-Methyltransferase enzyme by long-term heat stress during barley leaf growth.</title>
        <authorList>
            <person name="Leland T.J."/>
            <person name="Hanson A.D."/>
        </authorList>
    </citation>
    <scope>INDUCTION BY HIGH TEMPERATURES</scope>
    <scope>CATALYTIC ACTIVITY</scope>
    <scope>BIOPHYSICOCHEMICAL PROPERTIES</scope>
    <scope>ACTIVITY REGULATION</scope>
    <source>
        <strain>cv. Arimar</strain>
        <strain>cv. Proctor</strain>
    </source>
</reference>
<reference key="4">
    <citation type="journal article" date="2006" name="Phytochemistry">
        <title>N-Methyltransferase involved in gramine biosynthesis in barley: cloning and characterization.</title>
        <authorList>
            <person name="Larsson K.A.E."/>
            <person name="Zetterlund I."/>
            <person name="Delp G."/>
            <person name="Jonsson L.M.V."/>
        </authorList>
    </citation>
    <scope>FUNCTION</scope>
    <scope>CATALYTIC ACTIVITY</scope>
    <scope>BIOPHYSICOCHEMICAL PROPERTIES</scope>
    <scope>PATHWAY</scope>
    <scope>MISCELLANEOUS</scope>
    <source>
        <strain>cv. 5172-28:4</strain>
        <strain>cv. 5172-39:9</strain>
        <strain>cv. 5175-50:20</strain>
        <strain>cv. Barke</strain>
        <strain>cv. CI 11506</strain>
        <strain>cv. CI 16145</strain>
        <strain>cv. Golf</strain>
        <strain>cv. Hordeum vulgare ssp. spontaneum accession 5</strain>
        <strain>cv. Lina</strain>
        <strain>cv. Maythorpe</strain>
        <strain>cv. Mona</strain>
        <strain>cv. Morex</strain>
        <strain>cv. Osiris</strain>
    </source>
</reference>
<keyword id="KW-0489">Methyltransferase</keyword>
<keyword id="KW-1185">Reference proteome</keyword>
<keyword id="KW-0949">S-adenosyl-L-methionine</keyword>
<keyword id="KW-0808">Transferase</keyword>
<comment type="function">
    <text evidence="4">Methylates 3-aminomethylindole (AMI) and N-methyl-3-aminomethylindole (MAMI), two substrates involved in gramine biosynthesis, a toxic indole alkaloid. Can use S-adenosyl-L-methionine (AdoMet) as a methyl donor. Unable to mediate caffeic acid O-methylation.</text>
</comment>
<comment type="catalytic activity">
    <reaction evidence="3 4">
        <text>3-(aminomethyl)indole + 2 S-adenosyl-L-methionine = gramine + 2 S-adenosyl-L-homocysteine + 2 H(+)</text>
        <dbReference type="Rhea" id="RHEA:52264"/>
        <dbReference type="ChEBI" id="CHEBI:15378"/>
        <dbReference type="ChEBI" id="CHEBI:57856"/>
        <dbReference type="ChEBI" id="CHEBI:59789"/>
        <dbReference type="ChEBI" id="CHEBI:136514"/>
        <dbReference type="ChEBI" id="CHEBI:136516"/>
        <dbReference type="EC" id="2.1.1.340"/>
    </reaction>
</comment>
<comment type="activity regulation">
    <text evidence="3">Repressed by sodium carbonate, sodium bicarbonate and K-phosphate.</text>
</comment>
<comment type="biophysicochemical properties">
    <kinetics>
        <KM evidence="4">77 uM for 3-aminomethylindole</KM>
        <KM evidence="4">184 uM for N-methyl-3-aminomethylindole</KM>
        <KM evidence="4">148 uM for S-adenosyl-L-methionine</KM>
        <Vmax evidence="4">37.21 pmol/sec/mg enzyme with 3-aminomethylindole as substrate</Vmax>
        <Vmax evidence="4">43.54 pmol/sec/mg enzyme with N-methyl-3-aminomethylindole as substrate</Vmax>
        <Vmax evidence="4">14.5 pmol/sec/mg enzyme with S-adenosylmethionine as substrate</Vmax>
    </kinetics>
    <phDependence>
        <text evidence="3">Optimum pH is 9.</text>
    </phDependence>
</comment>
<comment type="pathway">
    <text evidence="4">Alkaloid biosynthesis.</text>
</comment>
<comment type="tissue specificity">
    <text evidence="3">More present in the fifth leaf than in the second leaf (at protein level).</text>
</comment>
<comment type="induction">
    <text evidence="3 5">Induced by jasmonic acid (PubMed:9524816). Triggered by high temperatures; 35 degrees Celsius day/30 degrees Celsius night (at protein level) (PubMed:16664431).</text>
</comment>
<comment type="miscellaneous">
    <text evidence="4 5">Present and expressed only in cultivars containing gramine (e.g. cv. 5172-28:4, cv. 5172-39:9, cv. 5175-50:20, cv. Hordeum vulgare ssp. spontaneum accession 5, cv. Golf, cv. Lina, cv. Barke, cv. Sultan5, cv. Igri, cv. Salome and cv. Osiris) but not detected in cv. CI 16145, cv. CI 11506, cv. Mona, cv. Morex and cv. Maythorpe.</text>
</comment>
<comment type="similarity">
    <text evidence="2">Belongs to the class I-like SAM-binding methyltransferase superfamily. Cation-independent O-methyltransferase family.</text>
</comment>
<accession>Q96565</accession>
<accession>Q42834</accession>
<sequence length="376" mass="41084">MDKISAPFFSGTSPAAASVAGVDEDDRLCFQAQELMFAYNISMVLRAAIQLGLLDALSAAGGKALTPNELVENVETSSNKAEAAAAVDRILRYLSCFNVVTCSSEAAGPDGTLVRRYTTGPLCRWLTKDRGDGTLSPFAVFVVDPDHLFPWHHIAEAVTAGGPSAFERTQKWPYYEYMGKNQRLGTLFDNAMAQHSVILVTKMLERFKGFDGVQRLVDVGGGTGSTLGMITSKYKHMTGINYDLPHVIAQGLPLPGVEHVAGDMYESIPTGDAVLLQWITLMLNDDEFVKILSNCHNALPKDGKVIVVDGILPENPDSSLTARDAFTLDIIMFVLFKGAKQRTEKEFARLAKQAGFTGGIKKTYIFFNFYALEFTK</sequence>
<dbReference type="EC" id="2.1.1.340" evidence="3 4"/>
<dbReference type="EMBL" id="U54767">
    <property type="protein sequence ID" value="AAC18643.1"/>
    <property type="molecule type" value="Genomic_DNA"/>
</dbReference>
<dbReference type="EMBL" id="AK353678">
    <property type="protein sequence ID" value="BAJ84897.1"/>
    <property type="molecule type" value="mRNA"/>
</dbReference>
<dbReference type="PIR" id="T06189">
    <property type="entry name" value="T06189"/>
</dbReference>
<dbReference type="SMR" id="Q96565"/>
<dbReference type="STRING" id="112509.Q96565"/>
<dbReference type="KEGG" id="ag:AAC18643"/>
<dbReference type="InParanoid" id="Q96565"/>
<dbReference type="BioCyc" id="MetaCyc:MONOMER-12933"/>
<dbReference type="BRENDA" id="2.1.1.340">
    <property type="organism ID" value="2683"/>
</dbReference>
<dbReference type="Proteomes" id="UP000011116">
    <property type="component" value="Unassembled WGS sequence"/>
</dbReference>
<dbReference type="GO" id="GO:0102913">
    <property type="term" value="F:3-aminomethylindole N-methyltransferase activity"/>
    <property type="evidence" value="ECO:0000314"/>
    <property type="project" value="UniProtKB"/>
</dbReference>
<dbReference type="GO" id="GO:0008171">
    <property type="term" value="F:O-methyltransferase activity"/>
    <property type="evidence" value="ECO:0000318"/>
    <property type="project" value="GO_Central"/>
</dbReference>
<dbReference type="GO" id="GO:0046983">
    <property type="term" value="F:protein dimerization activity"/>
    <property type="evidence" value="ECO:0007669"/>
    <property type="project" value="InterPro"/>
</dbReference>
<dbReference type="GO" id="GO:0008757">
    <property type="term" value="F:S-adenosylmethionine-dependent methyltransferase activity"/>
    <property type="evidence" value="ECO:0000318"/>
    <property type="project" value="GO_Central"/>
</dbReference>
<dbReference type="GO" id="GO:0009058">
    <property type="term" value="P:biosynthetic process"/>
    <property type="evidence" value="ECO:0000318"/>
    <property type="project" value="GO_Central"/>
</dbReference>
<dbReference type="GO" id="GO:0032259">
    <property type="term" value="P:methylation"/>
    <property type="evidence" value="ECO:0000318"/>
    <property type="project" value="GO_Central"/>
</dbReference>
<dbReference type="GO" id="GO:0009753">
    <property type="term" value="P:response to jasmonic acid"/>
    <property type="evidence" value="ECO:0000270"/>
    <property type="project" value="UniProtKB"/>
</dbReference>
<dbReference type="GO" id="GO:0009266">
    <property type="term" value="P:response to temperature stimulus"/>
    <property type="evidence" value="ECO:0000270"/>
    <property type="project" value="UniProtKB"/>
</dbReference>
<dbReference type="CDD" id="cd02440">
    <property type="entry name" value="AdoMet_MTases"/>
    <property type="match status" value="1"/>
</dbReference>
<dbReference type="Gene3D" id="3.40.50.150">
    <property type="entry name" value="Vaccinia Virus protein VP39"/>
    <property type="match status" value="1"/>
</dbReference>
<dbReference type="Gene3D" id="1.10.10.10">
    <property type="entry name" value="Winged helix-like DNA-binding domain superfamily/Winged helix DNA-binding domain"/>
    <property type="match status" value="1"/>
</dbReference>
<dbReference type="InterPro" id="IPR016461">
    <property type="entry name" value="COMT-like"/>
</dbReference>
<dbReference type="InterPro" id="IPR001077">
    <property type="entry name" value="O_MeTrfase_dom"/>
</dbReference>
<dbReference type="InterPro" id="IPR012967">
    <property type="entry name" value="Plant_O-MeTrfase_dimerisation"/>
</dbReference>
<dbReference type="InterPro" id="IPR029063">
    <property type="entry name" value="SAM-dependent_MTases_sf"/>
</dbReference>
<dbReference type="InterPro" id="IPR036388">
    <property type="entry name" value="WH-like_DNA-bd_sf"/>
</dbReference>
<dbReference type="InterPro" id="IPR036390">
    <property type="entry name" value="WH_DNA-bd_sf"/>
</dbReference>
<dbReference type="PANTHER" id="PTHR11746">
    <property type="entry name" value="O-METHYLTRANSFERASE"/>
    <property type="match status" value="1"/>
</dbReference>
<dbReference type="Pfam" id="PF08100">
    <property type="entry name" value="Dimerisation"/>
    <property type="match status" value="1"/>
</dbReference>
<dbReference type="Pfam" id="PF00891">
    <property type="entry name" value="Methyltransf_2"/>
    <property type="match status" value="1"/>
</dbReference>
<dbReference type="PIRSF" id="PIRSF005739">
    <property type="entry name" value="O-mtase"/>
    <property type="match status" value="1"/>
</dbReference>
<dbReference type="SUPFAM" id="SSF53335">
    <property type="entry name" value="S-adenosyl-L-methionine-dependent methyltransferases"/>
    <property type="match status" value="1"/>
</dbReference>
<dbReference type="SUPFAM" id="SSF46785">
    <property type="entry name" value="Winged helix' DNA-binding domain"/>
    <property type="match status" value="1"/>
</dbReference>
<dbReference type="PROSITE" id="PS51683">
    <property type="entry name" value="SAM_OMT_II"/>
    <property type="match status" value="1"/>
</dbReference>
<protein>
    <recommendedName>
        <fullName evidence="6">3-aminomethylindole N-methyltransferase</fullName>
        <ecNumber evidence="3 4">2.1.1.340</ecNumber>
    </recommendedName>
</protein>
<name>AMNMT_HORVV</name>
<organism>
    <name type="scientific">Hordeum vulgare subsp. vulgare</name>
    <name type="common">Domesticated barley</name>
    <dbReference type="NCBI Taxonomy" id="112509"/>
    <lineage>
        <taxon>Eukaryota</taxon>
        <taxon>Viridiplantae</taxon>
        <taxon>Streptophyta</taxon>
        <taxon>Embryophyta</taxon>
        <taxon>Tracheophyta</taxon>
        <taxon>Spermatophyta</taxon>
        <taxon>Magnoliopsida</taxon>
        <taxon>Liliopsida</taxon>
        <taxon>Poales</taxon>
        <taxon>Poaceae</taxon>
        <taxon>BOP clade</taxon>
        <taxon>Pooideae</taxon>
        <taxon>Triticodae</taxon>
        <taxon>Triticeae</taxon>
        <taxon>Hordeinae</taxon>
        <taxon>Hordeum</taxon>
    </lineage>
</organism>